<organism>
    <name type="scientific">Bacillus cereus (strain ATCC 14579 / DSM 31 / CCUG 7414 / JCM 2152 / NBRC 15305 / NCIMB 9373 / NCTC 2599 / NRRL B-3711)</name>
    <dbReference type="NCBI Taxonomy" id="226900"/>
    <lineage>
        <taxon>Bacteria</taxon>
        <taxon>Bacillati</taxon>
        <taxon>Bacillota</taxon>
        <taxon>Bacilli</taxon>
        <taxon>Bacillales</taxon>
        <taxon>Bacillaceae</taxon>
        <taxon>Bacillus</taxon>
        <taxon>Bacillus cereus group</taxon>
    </lineage>
</organism>
<evidence type="ECO:0000255" key="1">
    <source>
        <dbReference type="HAMAP-Rule" id="MF_00163"/>
    </source>
</evidence>
<evidence type="ECO:0007829" key="2">
    <source>
        <dbReference type="PDB" id="2OKL"/>
    </source>
</evidence>
<sequence length="184" mass="20474">MLTMKDVIREGDPILRNVAEEVSLPASEEDTTTLKEMIEFVINSQDPEMAEKYSLRPGIGLAAPQIGVSKKMIAVHVTDADGTLYSHALFNPKIISHSVERTYLQGGEGCLSVDREVPGYVPRYTRITVKATSINGEEVKLRLKGLPAIVFQHEIDHLNGVMFYDHINKENPFAAPDDSKPLER</sequence>
<accession>Q819K2</accession>
<comment type="function">
    <text evidence="1">Removes the formyl group from the N-terminal Met of newly synthesized proteins. Requires at least a dipeptide for an efficient rate of reaction. N-terminal L-methionine is a prerequisite for activity but the enzyme has broad specificity at other positions.</text>
</comment>
<comment type="catalytic activity">
    <reaction evidence="1">
        <text>N-terminal N-formyl-L-methionyl-[peptide] + H2O = N-terminal L-methionyl-[peptide] + formate</text>
        <dbReference type="Rhea" id="RHEA:24420"/>
        <dbReference type="Rhea" id="RHEA-COMP:10639"/>
        <dbReference type="Rhea" id="RHEA-COMP:10640"/>
        <dbReference type="ChEBI" id="CHEBI:15377"/>
        <dbReference type="ChEBI" id="CHEBI:15740"/>
        <dbReference type="ChEBI" id="CHEBI:49298"/>
        <dbReference type="ChEBI" id="CHEBI:64731"/>
        <dbReference type="EC" id="3.5.1.88"/>
    </reaction>
</comment>
<comment type="cofactor">
    <cofactor evidence="1">
        <name>Fe(2+)</name>
        <dbReference type="ChEBI" id="CHEBI:29033"/>
    </cofactor>
    <text evidence="1">Binds 1 Fe(2+) ion.</text>
</comment>
<comment type="similarity">
    <text evidence="1">Belongs to the polypeptide deformylase family.</text>
</comment>
<feature type="chain" id="PRO_0000082736" description="Peptide deformylase 2">
    <location>
        <begin position="1"/>
        <end position="184"/>
    </location>
</feature>
<feature type="active site" evidence="1">
    <location>
        <position position="154"/>
    </location>
</feature>
<feature type="binding site" evidence="1">
    <location>
        <position position="110"/>
    </location>
    <ligand>
        <name>Fe cation</name>
        <dbReference type="ChEBI" id="CHEBI:24875"/>
    </ligand>
</feature>
<feature type="binding site" evidence="1">
    <location>
        <position position="153"/>
    </location>
    <ligand>
        <name>Fe cation</name>
        <dbReference type="ChEBI" id="CHEBI:24875"/>
    </ligand>
</feature>
<feature type="binding site" evidence="1">
    <location>
        <position position="157"/>
    </location>
    <ligand>
        <name>Fe cation</name>
        <dbReference type="ChEBI" id="CHEBI:24875"/>
    </ligand>
</feature>
<feature type="helix" evidence="2">
    <location>
        <begin position="4"/>
        <end position="6"/>
    </location>
</feature>
<feature type="helix" evidence="2">
    <location>
        <begin position="13"/>
        <end position="16"/>
    </location>
</feature>
<feature type="helix" evidence="2">
    <location>
        <begin position="28"/>
        <end position="44"/>
    </location>
</feature>
<feature type="helix" evidence="2">
    <location>
        <begin position="47"/>
        <end position="52"/>
    </location>
</feature>
<feature type="strand" evidence="2">
    <location>
        <begin position="59"/>
        <end position="62"/>
    </location>
</feature>
<feature type="helix" evidence="2">
    <location>
        <begin position="63"/>
        <end position="66"/>
    </location>
</feature>
<feature type="strand" evidence="2">
    <location>
        <begin position="70"/>
        <end position="78"/>
    </location>
</feature>
<feature type="strand" evidence="2">
    <location>
        <begin position="84"/>
        <end position="97"/>
    </location>
</feature>
<feature type="strand" evidence="2">
    <location>
        <begin position="99"/>
        <end position="103"/>
    </location>
</feature>
<feature type="strand" evidence="2">
    <location>
        <begin position="123"/>
        <end position="133"/>
    </location>
</feature>
<feature type="strand" evidence="2">
    <location>
        <begin position="138"/>
        <end position="144"/>
    </location>
</feature>
<feature type="helix" evidence="2">
    <location>
        <begin position="145"/>
        <end position="158"/>
    </location>
</feature>
<feature type="helix" evidence="2">
    <location>
        <begin position="163"/>
        <end position="166"/>
    </location>
</feature>
<feature type="strand" evidence="2">
    <location>
        <begin position="177"/>
        <end position="181"/>
    </location>
</feature>
<dbReference type="EC" id="3.5.1.88" evidence="1"/>
<dbReference type="EMBL" id="AE016877">
    <property type="protein sequence ID" value="AAP10894.1"/>
    <property type="molecule type" value="Genomic_DNA"/>
</dbReference>
<dbReference type="RefSeq" id="NP_833693.1">
    <property type="nucleotide sequence ID" value="NC_004722.1"/>
</dbReference>
<dbReference type="PDB" id="2OKL">
    <property type="method" value="X-ray"/>
    <property type="resolution" value="1.70 A"/>
    <property type="chains" value="A/B=1-184"/>
</dbReference>
<dbReference type="PDBsum" id="2OKL"/>
<dbReference type="SMR" id="Q819K2"/>
<dbReference type="STRING" id="226900.BC_3974"/>
<dbReference type="DrugBank" id="DB04310">
    <property type="generic name" value="2-[(Formyl-Hydroxy-Amino)-Methyl]-Heptanoic Acid [1-(2-Hydroxymethyl-Pyrrolidine-1-Carbonyl)-2-Methyl-Propyl]-Amide"/>
</dbReference>
<dbReference type="KEGG" id="bce:BC3974"/>
<dbReference type="PATRIC" id="fig|226900.8.peg.4100"/>
<dbReference type="HOGENOM" id="CLU_061901_4_0_9"/>
<dbReference type="OrthoDB" id="9784988at2"/>
<dbReference type="BRENDA" id="3.5.1.88">
    <property type="organism ID" value="648"/>
</dbReference>
<dbReference type="EvolutionaryTrace" id="Q819K2"/>
<dbReference type="Proteomes" id="UP000001417">
    <property type="component" value="Chromosome"/>
</dbReference>
<dbReference type="GO" id="GO:0046872">
    <property type="term" value="F:metal ion binding"/>
    <property type="evidence" value="ECO:0007669"/>
    <property type="project" value="UniProtKB-KW"/>
</dbReference>
<dbReference type="GO" id="GO:0042586">
    <property type="term" value="F:peptide deformylase activity"/>
    <property type="evidence" value="ECO:0000318"/>
    <property type="project" value="GO_Central"/>
</dbReference>
<dbReference type="GO" id="GO:0043686">
    <property type="term" value="P:co-translational protein modification"/>
    <property type="evidence" value="ECO:0000318"/>
    <property type="project" value="GO_Central"/>
</dbReference>
<dbReference type="GO" id="GO:0006412">
    <property type="term" value="P:translation"/>
    <property type="evidence" value="ECO:0007669"/>
    <property type="project" value="UniProtKB-UniRule"/>
</dbReference>
<dbReference type="CDD" id="cd00487">
    <property type="entry name" value="Pep_deformylase"/>
    <property type="match status" value="1"/>
</dbReference>
<dbReference type="FunFam" id="3.90.45.10:FF:000002">
    <property type="entry name" value="Peptide deformylase"/>
    <property type="match status" value="1"/>
</dbReference>
<dbReference type="Gene3D" id="3.90.45.10">
    <property type="entry name" value="Peptide deformylase"/>
    <property type="match status" value="1"/>
</dbReference>
<dbReference type="HAMAP" id="MF_00163">
    <property type="entry name" value="Pep_deformylase"/>
    <property type="match status" value="1"/>
</dbReference>
<dbReference type="InterPro" id="IPR023635">
    <property type="entry name" value="Peptide_deformylase"/>
</dbReference>
<dbReference type="InterPro" id="IPR036821">
    <property type="entry name" value="Peptide_deformylase_sf"/>
</dbReference>
<dbReference type="NCBIfam" id="TIGR00079">
    <property type="entry name" value="pept_deformyl"/>
    <property type="match status" value="1"/>
</dbReference>
<dbReference type="PANTHER" id="PTHR10458">
    <property type="entry name" value="PEPTIDE DEFORMYLASE"/>
    <property type="match status" value="1"/>
</dbReference>
<dbReference type="PANTHER" id="PTHR10458:SF8">
    <property type="entry name" value="PEPTIDE DEFORMYLASE 2"/>
    <property type="match status" value="1"/>
</dbReference>
<dbReference type="Pfam" id="PF01327">
    <property type="entry name" value="Pep_deformylase"/>
    <property type="match status" value="1"/>
</dbReference>
<dbReference type="PIRSF" id="PIRSF004749">
    <property type="entry name" value="Pep_def"/>
    <property type="match status" value="1"/>
</dbReference>
<dbReference type="PRINTS" id="PR01576">
    <property type="entry name" value="PDEFORMYLASE"/>
</dbReference>
<dbReference type="SUPFAM" id="SSF56420">
    <property type="entry name" value="Peptide deformylase"/>
    <property type="match status" value="1"/>
</dbReference>
<gene>
    <name evidence="1" type="primary">def2</name>
    <name type="ordered locus">BC_3974</name>
</gene>
<reference key="1">
    <citation type="journal article" date="2003" name="Nature">
        <title>Genome sequence of Bacillus cereus and comparative analysis with Bacillus anthracis.</title>
        <authorList>
            <person name="Ivanova N."/>
            <person name="Sorokin A."/>
            <person name="Anderson I."/>
            <person name="Galleron N."/>
            <person name="Candelon B."/>
            <person name="Kapatral V."/>
            <person name="Bhattacharyya A."/>
            <person name="Reznik G."/>
            <person name="Mikhailova N."/>
            <person name="Lapidus A."/>
            <person name="Chu L."/>
            <person name="Mazur M."/>
            <person name="Goltsman E."/>
            <person name="Larsen N."/>
            <person name="D'Souza M."/>
            <person name="Walunas T."/>
            <person name="Grechkin Y."/>
            <person name="Pusch G."/>
            <person name="Haselkorn R."/>
            <person name="Fonstein M."/>
            <person name="Ehrlich S.D."/>
            <person name="Overbeek R."/>
            <person name="Kyrpides N.C."/>
        </authorList>
    </citation>
    <scope>NUCLEOTIDE SEQUENCE [LARGE SCALE GENOMIC DNA]</scope>
    <source>
        <strain>ATCC 14579 / DSM 31 / CCUG 7414 / JCM 2152 / NBRC 15305 / NCIMB 9373 / NCTC 2599 / NRRL B-3711</strain>
    </source>
</reference>
<protein>
    <recommendedName>
        <fullName evidence="1">Peptide deformylase 2</fullName>
        <shortName evidence="1">PDF 2</shortName>
        <ecNumber evidence="1">3.5.1.88</ecNumber>
    </recommendedName>
    <alternativeName>
        <fullName evidence="1">Polypeptide deformylase 2</fullName>
    </alternativeName>
</protein>
<keyword id="KW-0002">3D-structure</keyword>
<keyword id="KW-0378">Hydrolase</keyword>
<keyword id="KW-0408">Iron</keyword>
<keyword id="KW-0479">Metal-binding</keyword>
<keyword id="KW-0648">Protein biosynthesis</keyword>
<keyword id="KW-1185">Reference proteome</keyword>
<proteinExistence type="evidence at protein level"/>
<name>DEF2_BACCR</name>